<dbReference type="EMBL" id="CP000479">
    <property type="protein sequence ID" value="ABK65746.1"/>
    <property type="molecule type" value="Genomic_DNA"/>
</dbReference>
<dbReference type="RefSeq" id="WP_011724542.1">
    <property type="nucleotide sequence ID" value="NC_008595.1"/>
</dbReference>
<dbReference type="SMR" id="A0QEA3"/>
<dbReference type="KEGG" id="mav:MAV_2022"/>
<dbReference type="HOGENOM" id="CLU_050019_2_0_11"/>
<dbReference type="Proteomes" id="UP000001574">
    <property type="component" value="Chromosome"/>
</dbReference>
<dbReference type="GO" id="GO:0003677">
    <property type="term" value="F:DNA binding"/>
    <property type="evidence" value="ECO:0007669"/>
    <property type="project" value="InterPro"/>
</dbReference>
<dbReference type="GO" id="GO:0045892">
    <property type="term" value="P:negative regulation of DNA-templated transcription"/>
    <property type="evidence" value="ECO:0007669"/>
    <property type="project" value="UniProtKB-UniRule"/>
</dbReference>
<dbReference type="FunFam" id="1.10.10.10:FF:000049">
    <property type="entry name" value="Heat-inducible transcription repressor HrcA"/>
    <property type="match status" value="1"/>
</dbReference>
<dbReference type="FunFam" id="3.30.390.60:FF:000003">
    <property type="entry name" value="Heat-inducible transcription repressor HrcA"/>
    <property type="match status" value="1"/>
</dbReference>
<dbReference type="Gene3D" id="3.30.450.40">
    <property type="match status" value="1"/>
</dbReference>
<dbReference type="Gene3D" id="3.30.390.60">
    <property type="entry name" value="Heat-inducible transcription repressor hrca homolog, domain 3"/>
    <property type="match status" value="1"/>
</dbReference>
<dbReference type="Gene3D" id="1.10.10.10">
    <property type="entry name" value="Winged helix-like DNA-binding domain superfamily/Winged helix DNA-binding domain"/>
    <property type="match status" value="1"/>
</dbReference>
<dbReference type="HAMAP" id="MF_00081">
    <property type="entry name" value="HrcA"/>
    <property type="match status" value="1"/>
</dbReference>
<dbReference type="InterPro" id="IPR029016">
    <property type="entry name" value="GAF-like_dom_sf"/>
</dbReference>
<dbReference type="InterPro" id="IPR002571">
    <property type="entry name" value="HrcA"/>
</dbReference>
<dbReference type="InterPro" id="IPR021153">
    <property type="entry name" value="HrcA_C"/>
</dbReference>
<dbReference type="InterPro" id="IPR036388">
    <property type="entry name" value="WH-like_DNA-bd_sf"/>
</dbReference>
<dbReference type="InterPro" id="IPR036390">
    <property type="entry name" value="WH_DNA-bd_sf"/>
</dbReference>
<dbReference type="InterPro" id="IPR023120">
    <property type="entry name" value="WHTH_transcript_rep_HrcA_IDD"/>
</dbReference>
<dbReference type="NCBIfam" id="TIGR00331">
    <property type="entry name" value="hrcA"/>
    <property type="match status" value="1"/>
</dbReference>
<dbReference type="PANTHER" id="PTHR34824">
    <property type="entry name" value="HEAT-INDUCIBLE TRANSCRIPTION REPRESSOR HRCA"/>
    <property type="match status" value="1"/>
</dbReference>
<dbReference type="PANTHER" id="PTHR34824:SF1">
    <property type="entry name" value="HEAT-INDUCIBLE TRANSCRIPTION REPRESSOR HRCA"/>
    <property type="match status" value="1"/>
</dbReference>
<dbReference type="Pfam" id="PF01628">
    <property type="entry name" value="HrcA"/>
    <property type="match status" value="1"/>
</dbReference>
<dbReference type="PIRSF" id="PIRSF005485">
    <property type="entry name" value="HrcA"/>
    <property type="match status" value="1"/>
</dbReference>
<dbReference type="SUPFAM" id="SSF55781">
    <property type="entry name" value="GAF domain-like"/>
    <property type="match status" value="1"/>
</dbReference>
<dbReference type="SUPFAM" id="SSF46785">
    <property type="entry name" value="Winged helix' DNA-binding domain"/>
    <property type="match status" value="1"/>
</dbReference>
<proteinExistence type="inferred from homology"/>
<keyword id="KW-0678">Repressor</keyword>
<keyword id="KW-0346">Stress response</keyword>
<keyword id="KW-0804">Transcription</keyword>
<keyword id="KW-0805">Transcription regulation</keyword>
<comment type="function">
    <text evidence="1">Negative regulator of class I heat shock genes (grpE-dnaK-dnaJ and groELS operons). Prevents heat-shock induction of these operons.</text>
</comment>
<comment type="similarity">
    <text evidence="1">Belongs to the HrcA family.</text>
</comment>
<name>HRCA_MYCA1</name>
<evidence type="ECO:0000255" key="1">
    <source>
        <dbReference type="HAMAP-Rule" id="MF_00081"/>
    </source>
</evidence>
<sequence>MGSADERRFEVLRAIVADFIATKEPIGSKTLVERHNLGVSSATVRNDMAVLEAEGYITQPHTSSGRVPTEKGYREFVDRLDDVKPLSAAERRAIQNFLESGVDLDDVLRRAVRLLAQLTRQVAIVQYPTLSSSTVRHLEVIALTPARLLMVVITDSGRVDQRIVELGDVIDDHELSRLREMLGQALVGKKLSAASVAVADLAEQLRSPDGLGDAVGRSATVLLESLVEHSEERLLMGGTANLTRNAADFGGSLRSILEALEEQVVVLRLLAAQQEAGKVTVRIGYETAAEQMVGTSMVTTAYGTSDTVYGGMGVLGPTRMDYPGTIASVAAVAMYIGEVLGAR</sequence>
<feature type="chain" id="PRO_1000010423" description="Heat-inducible transcription repressor HrcA">
    <location>
        <begin position="1"/>
        <end position="343"/>
    </location>
</feature>
<accession>A0QEA3</accession>
<protein>
    <recommendedName>
        <fullName evidence="1">Heat-inducible transcription repressor HrcA</fullName>
    </recommendedName>
</protein>
<reference key="1">
    <citation type="submission" date="2006-10" db="EMBL/GenBank/DDBJ databases">
        <authorList>
            <person name="Fleischmann R.D."/>
            <person name="Dodson R.J."/>
            <person name="Haft D.H."/>
            <person name="Merkel J.S."/>
            <person name="Nelson W.C."/>
            <person name="Fraser C.M."/>
        </authorList>
    </citation>
    <scope>NUCLEOTIDE SEQUENCE [LARGE SCALE GENOMIC DNA]</scope>
    <source>
        <strain>104</strain>
    </source>
</reference>
<organism>
    <name type="scientific">Mycobacterium avium (strain 104)</name>
    <dbReference type="NCBI Taxonomy" id="243243"/>
    <lineage>
        <taxon>Bacteria</taxon>
        <taxon>Bacillati</taxon>
        <taxon>Actinomycetota</taxon>
        <taxon>Actinomycetes</taxon>
        <taxon>Mycobacteriales</taxon>
        <taxon>Mycobacteriaceae</taxon>
        <taxon>Mycobacterium</taxon>
        <taxon>Mycobacterium avium complex (MAC)</taxon>
    </lineage>
</organism>
<gene>
    <name evidence="1" type="primary">hrcA</name>
    <name type="ordered locus">MAV_2022</name>
</gene>